<organism>
    <name type="scientific">Haemophilus influenzae (strain PittEE)</name>
    <dbReference type="NCBI Taxonomy" id="374930"/>
    <lineage>
        <taxon>Bacteria</taxon>
        <taxon>Pseudomonadati</taxon>
        <taxon>Pseudomonadota</taxon>
        <taxon>Gammaproteobacteria</taxon>
        <taxon>Pasteurellales</taxon>
        <taxon>Pasteurellaceae</taxon>
        <taxon>Haemophilus</taxon>
    </lineage>
</organism>
<feature type="chain" id="PRO_1000060114" description="Na(+)-translocating NADH-quinone reductase subunit A">
    <location>
        <begin position="1"/>
        <end position="447"/>
    </location>
</feature>
<keyword id="KW-0406">Ion transport</keyword>
<keyword id="KW-0520">NAD</keyword>
<keyword id="KW-0915">Sodium</keyword>
<keyword id="KW-0739">Sodium transport</keyword>
<keyword id="KW-1278">Translocase</keyword>
<keyword id="KW-0813">Transport</keyword>
<keyword id="KW-0830">Ubiquinone</keyword>
<dbReference type="EC" id="7.2.1.1" evidence="1"/>
<dbReference type="EMBL" id="CP000671">
    <property type="protein sequence ID" value="ABQ97922.1"/>
    <property type="molecule type" value="Genomic_DNA"/>
</dbReference>
<dbReference type="SMR" id="A5UAX1"/>
<dbReference type="KEGG" id="hip:CGSHiEE_02355"/>
<dbReference type="HOGENOM" id="CLU_046656_0_0_6"/>
<dbReference type="GO" id="GO:0016655">
    <property type="term" value="F:oxidoreductase activity, acting on NAD(P)H, quinone or similar compound as acceptor"/>
    <property type="evidence" value="ECO:0007669"/>
    <property type="project" value="UniProtKB-UniRule"/>
</dbReference>
<dbReference type="GO" id="GO:0006814">
    <property type="term" value="P:sodium ion transport"/>
    <property type="evidence" value="ECO:0007669"/>
    <property type="project" value="UniProtKB-UniRule"/>
</dbReference>
<dbReference type="Gene3D" id="2.40.50.100">
    <property type="match status" value="1"/>
</dbReference>
<dbReference type="HAMAP" id="MF_00425">
    <property type="entry name" value="NqrA"/>
    <property type="match status" value="1"/>
</dbReference>
<dbReference type="InterPro" id="IPR008703">
    <property type="entry name" value="NqrA"/>
</dbReference>
<dbReference type="InterPro" id="IPR056148">
    <property type="entry name" value="NQRA_2nd"/>
</dbReference>
<dbReference type="InterPro" id="IPR022615">
    <property type="entry name" value="NqrA_C_domain"/>
</dbReference>
<dbReference type="InterPro" id="IPR056147">
    <property type="entry name" value="NQRA_N"/>
</dbReference>
<dbReference type="NCBIfam" id="TIGR01936">
    <property type="entry name" value="nqrA"/>
    <property type="match status" value="1"/>
</dbReference>
<dbReference type="NCBIfam" id="NF003759">
    <property type="entry name" value="PRK05352.1-2"/>
    <property type="match status" value="1"/>
</dbReference>
<dbReference type="PANTHER" id="PTHR37839">
    <property type="entry name" value="NA(+)-TRANSLOCATING NADH-QUINONE REDUCTASE SUBUNIT A"/>
    <property type="match status" value="1"/>
</dbReference>
<dbReference type="PANTHER" id="PTHR37839:SF1">
    <property type="entry name" value="NA(+)-TRANSLOCATING NADH-QUINONE REDUCTASE SUBUNIT A"/>
    <property type="match status" value="1"/>
</dbReference>
<dbReference type="Pfam" id="PF24836">
    <property type="entry name" value="NQRA_2nd"/>
    <property type="match status" value="1"/>
</dbReference>
<dbReference type="Pfam" id="PF05896">
    <property type="entry name" value="NQRA_N"/>
    <property type="match status" value="1"/>
</dbReference>
<dbReference type="Pfam" id="PF11973">
    <property type="entry name" value="NQRA_SLBB"/>
    <property type="match status" value="1"/>
</dbReference>
<proteinExistence type="inferred from homology"/>
<comment type="function">
    <text evidence="1">NQR complex catalyzes the reduction of ubiquinone-1 to ubiquinol by two successive reactions, coupled with the transport of Na(+) ions from the cytoplasm to the periplasm. NqrA to NqrE are probably involved in the second step, the conversion of ubisemiquinone to ubiquinol.</text>
</comment>
<comment type="catalytic activity">
    <reaction evidence="1">
        <text>a ubiquinone + n Na(+)(in) + NADH + H(+) = a ubiquinol + n Na(+)(out) + NAD(+)</text>
        <dbReference type="Rhea" id="RHEA:47748"/>
        <dbReference type="Rhea" id="RHEA-COMP:9565"/>
        <dbReference type="Rhea" id="RHEA-COMP:9566"/>
        <dbReference type="ChEBI" id="CHEBI:15378"/>
        <dbReference type="ChEBI" id="CHEBI:16389"/>
        <dbReference type="ChEBI" id="CHEBI:17976"/>
        <dbReference type="ChEBI" id="CHEBI:29101"/>
        <dbReference type="ChEBI" id="CHEBI:57540"/>
        <dbReference type="ChEBI" id="CHEBI:57945"/>
        <dbReference type="EC" id="7.2.1.1"/>
    </reaction>
</comment>
<comment type="subunit">
    <text evidence="1">Composed of six subunits; NqrA, NqrB, NqrC, NqrD, NqrE and NqrF.</text>
</comment>
<comment type="similarity">
    <text evidence="1">Belongs to the NqrA family.</text>
</comment>
<protein>
    <recommendedName>
        <fullName evidence="1">Na(+)-translocating NADH-quinone reductase subunit A</fullName>
        <shortName evidence="1">Na(+)-NQR subunit A</shortName>
        <shortName evidence="1">Na(+)-translocating NQR subunit A</shortName>
        <ecNumber evidence="1">7.2.1.1</ecNumber>
    </recommendedName>
    <alternativeName>
        <fullName evidence="1">NQR complex subunit A</fullName>
    </alternativeName>
    <alternativeName>
        <fullName evidence="1">NQR-1 subunit A</fullName>
    </alternativeName>
</protein>
<name>NQRA_HAEIE</name>
<reference key="1">
    <citation type="journal article" date="2007" name="Genome Biol.">
        <title>Characterization and modeling of the Haemophilus influenzae core and supragenomes based on the complete genomic sequences of Rd and 12 clinical nontypeable strains.</title>
        <authorList>
            <person name="Hogg J.S."/>
            <person name="Hu F.Z."/>
            <person name="Janto B."/>
            <person name="Boissy R."/>
            <person name="Hayes J."/>
            <person name="Keefe R."/>
            <person name="Post J.C."/>
            <person name="Ehrlich G.D."/>
        </authorList>
    </citation>
    <scope>NUCLEOTIDE SEQUENCE [LARGE SCALE GENOMIC DNA]</scope>
    <source>
        <strain>PittEE</strain>
    </source>
</reference>
<accession>A5UAX1</accession>
<evidence type="ECO:0000255" key="1">
    <source>
        <dbReference type="HAMAP-Rule" id="MF_00425"/>
    </source>
</evidence>
<sequence>MITIKKGLDLPIAGKPAQVIHSGNAVNQVAILGEEYVGMRPSMKVREGDVVKKGQVLFEDKKNPGVIFTAPASGTITAINRGEKRVLQSVVINVEGDEKITFAKYSTEQLNTLSSEQVKQNLIESGLWTALRTRPFSKVPSIESEASSLFVNAMDTNPLAADPSVVLKEYSQDFTNGLTVLSRLFPSKPLHLCKAGDSNIPTTDLENLQIHDFTGVHPAGLVGTHIHFIDPVGIQKTVWHINYQDVIAVGKLFTTGELYSERVISLAGPQVKEPRLVRTIIGVNLSQLTQNELSAGKNRVISGSVLCGQIAKDSHDYLGRYALQVSVIAEGNEKEFFGWIMPQANKYSVTRTVLGHFSKKLFNFTTSENGGERAMVPIGSYERVMPLDILPTLLLRDLIVGDTDGAQELGCLELDEEDLALCSFVCPGKYEYGSILRQVLDKIEKEG</sequence>
<gene>
    <name evidence="1" type="primary">nqrA</name>
    <name type="ordered locus">CGSHiEE_02355</name>
</gene>